<sequence length="436" mass="49200">MTVYHFVGIKGTGMSSLAQILHDMKHTVQGSDYEKRFFTQTALEKRSISILPFDKNNVEEGQVIIAGNAFPDTHEEIVAAKELNIPVHRYHHFLGDLMSQYTSVAVTGAHGKTSTTGLLAHVMQGAHPTSYLIGDGTGHGVENSKYFVFEACEYRRHFLSYNPDYAIMTNIDFDHPDYFADINDVFSAFQEMALQVKKGIIACGDDEELQKIQAKVPVIFYGFGEDNDFQARNIQKRTDGTIFDVFVRNTYYDTFKITGYGNHSVLNALAVIALCHYENVDVEAVKHQLTTFEGVKRRFNEKPMGEQVIIDDYAHHPTEINATIEAARQKHPEREIVAVFQPHTFSRTEKFLDEFAESLSKADQVYLCDIFGSARENKGELTIEDLQKRIDGAELITDTTTDVLKKHKNGVLIFMGAGDIQKFEAAYVKEVQVAEK</sequence>
<reference key="1">
    <citation type="journal article" date="2003" name="Nature">
        <title>Genome sequence of Bacillus cereus and comparative analysis with Bacillus anthracis.</title>
        <authorList>
            <person name="Ivanova N."/>
            <person name="Sorokin A."/>
            <person name="Anderson I."/>
            <person name="Galleron N."/>
            <person name="Candelon B."/>
            <person name="Kapatral V."/>
            <person name="Bhattacharyya A."/>
            <person name="Reznik G."/>
            <person name="Mikhailova N."/>
            <person name="Lapidus A."/>
            <person name="Chu L."/>
            <person name="Mazur M."/>
            <person name="Goltsman E."/>
            <person name="Larsen N."/>
            <person name="D'Souza M."/>
            <person name="Walunas T."/>
            <person name="Grechkin Y."/>
            <person name="Pusch G."/>
            <person name="Haselkorn R."/>
            <person name="Fonstein M."/>
            <person name="Ehrlich S.D."/>
            <person name="Overbeek R."/>
            <person name="Kyrpides N.C."/>
        </authorList>
    </citation>
    <scope>NUCLEOTIDE SEQUENCE [LARGE SCALE GENOMIC DNA]</scope>
    <source>
        <strain>ATCC 14579 / DSM 31 / CCUG 7414 / JCM 2152 / NBRC 15305 / NCIMB 9373 / NCTC 2599 / NRRL B-3711</strain>
    </source>
</reference>
<evidence type="ECO:0000255" key="1">
    <source>
        <dbReference type="HAMAP-Rule" id="MF_00046"/>
    </source>
</evidence>
<comment type="function">
    <text evidence="1">Cell wall formation.</text>
</comment>
<comment type="catalytic activity">
    <reaction evidence="1">
        <text>UDP-N-acetyl-alpha-D-muramate + L-alanine + ATP = UDP-N-acetyl-alpha-D-muramoyl-L-alanine + ADP + phosphate + H(+)</text>
        <dbReference type="Rhea" id="RHEA:23372"/>
        <dbReference type="ChEBI" id="CHEBI:15378"/>
        <dbReference type="ChEBI" id="CHEBI:30616"/>
        <dbReference type="ChEBI" id="CHEBI:43474"/>
        <dbReference type="ChEBI" id="CHEBI:57972"/>
        <dbReference type="ChEBI" id="CHEBI:70757"/>
        <dbReference type="ChEBI" id="CHEBI:83898"/>
        <dbReference type="ChEBI" id="CHEBI:456216"/>
        <dbReference type="EC" id="6.3.2.8"/>
    </reaction>
</comment>
<comment type="pathway">
    <text evidence="1">Cell wall biogenesis; peptidoglycan biosynthesis.</text>
</comment>
<comment type="subcellular location">
    <subcellularLocation>
        <location evidence="1">Cytoplasm</location>
    </subcellularLocation>
</comment>
<comment type="similarity">
    <text evidence="1">Belongs to the MurCDEF family.</text>
</comment>
<gene>
    <name evidence="1" type="primary">murC</name>
    <name type="ordered locus">BC_4684</name>
</gene>
<name>MURC_BACCR</name>
<dbReference type="EC" id="6.3.2.8" evidence="1"/>
<dbReference type="EMBL" id="AE016877">
    <property type="protein sequence ID" value="AAP11591.1"/>
    <property type="molecule type" value="Genomic_DNA"/>
</dbReference>
<dbReference type="RefSeq" id="NP_834390.1">
    <property type="nucleotide sequence ID" value="NC_004722.1"/>
</dbReference>
<dbReference type="RefSeq" id="WP_000219468.1">
    <property type="nucleotide sequence ID" value="NZ_CP138336.1"/>
</dbReference>
<dbReference type="SMR" id="Q816X6"/>
<dbReference type="STRING" id="226900.BC_4684"/>
<dbReference type="KEGG" id="bce:BC4684"/>
<dbReference type="PATRIC" id="fig|226900.8.peg.4847"/>
<dbReference type="HOGENOM" id="CLU_028104_1_0_9"/>
<dbReference type="OrthoDB" id="9804126at2"/>
<dbReference type="UniPathway" id="UPA00219"/>
<dbReference type="Proteomes" id="UP000001417">
    <property type="component" value="Chromosome"/>
</dbReference>
<dbReference type="GO" id="GO:0005737">
    <property type="term" value="C:cytoplasm"/>
    <property type="evidence" value="ECO:0007669"/>
    <property type="project" value="UniProtKB-SubCell"/>
</dbReference>
<dbReference type="GO" id="GO:0005524">
    <property type="term" value="F:ATP binding"/>
    <property type="evidence" value="ECO:0007669"/>
    <property type="project" value="UniProtKB-UniRule"/>
</dbReference>
<dbReference type="GO" id="GO:0008763">
    <property type="term" value="F:UDP-N-acetylmuramate-L-alanine ligase activity"/>
    <property type="evidence" value="ECO:0007669"/>
    <property type="project" value="UniProtKB-UniRule"/>
</dbReference>
<dbReference type="GO" id="GO:0051301">
    <property type="term" value="P:cell division"/>
    <property type="evidence" value="ECO:0007669"/>
    <property type="project" value="UniProtKB-KW"/>
</dbReference>
<dbReference type="GO" id="GO:0071555">
    <property type="term" value="P:cell wall organization"/>
    <property type="evidence" value="ECO:0007669"/>
    <property type="project" value="UniProtKB-KW"/>
</dbReference>
<dbReference type="GO" id="GO:0009252">
    <property type="term" value="P:peptidoglycan biosynthetic process"/>
    <property type="evidence" value="ECO:0007669"/>
    <property type="project" value="UniProtKB-UniRule"/>
</dbReference>
<dbReference type="GO" id="GO:0008360">
    <property type="term" value="P:regulation of cell shape"/>
    <property type="evidence" value="ECO:0007669"/>
    <property type="project" value="UniProtKB-KW"/>
</dbReference>
<dbReference type="Gene3D" id="3.90.190.20">
    <property type="entry name" value="Mur ligase, C-terminal domain"/>
    <property type="match status" value="1"/>
</dbReference>
<dbReference type="Gene3D" id="3.40.1190.10">
    <property type="entry name" value="Mur-like, catalytic domain"/>
    <property type="match status" value="1"/>
</dbReference>
<dbReference type="Gene3D" id="3.40.50.720">
    <property type="entry name" value="NAD(P)-binding Rossmann-like Domain"/>
    <property type="match status" value="1"/>
</dbReference>
<dbReference type="HAMAP" id="MF_00046">
    <property type="entry name" value="MurC"/>
    <property type="match status" value="1"/>
</dbReference>
<dbReference type="InterPro" id="IPR036565">
    <property type="entry name" value="Mur-like_cat_sf"/>
</dbReference>
<dbReference type="InterPro" id="IPR004101">
    <property type="entry name" value="Mur_ligase_C"/>
</dbReference>
<dbReference type="InterPro" id="IPR036615">
    <property type="entry name" value="Mur_ligase_C_dom_sf"/>
</dbReference>
<dbReference type="InterPro" id="IPR013221">
    <property type="entry name" value="Mur_ligase_cen"/>
</dbReference>
<dbReference type="InterPro" id="IPR000713">
    <property type="entry name" value="Mur_ligase_N"/>
</dbReference>
<dbReference type="InterPro" id="IPR050061">
    <property type="entry name" value="MurCDEF_pg_biosynth"/>
</dbReference>
<dbReference type="InterPro" id="IPR005758">
    <property type="entry name" value="UDP-N-AcMur_Ala_ligase_MurC"/>
</dbReference>
<dbReference type="NCBIfam" id="TIGR01082">
    <property type="entry name" value="murC"/>
    <property type="match status" value="1"/>
</dbReference>
<dbReference type="PANTHER" id="PTHR43445:SF3">
    <property type="entry name" value="UDP-N-ACETYLMURAMATE--L-ALANINE LIGASE"/>
    <property type="match status" value="1"/>
</dbReference>
<dbReference type="PANTHER" id="PTHR43445">
    <property type="entry name" value="UDP-N-ACETYLMURAMATE--L-ALANINE LIGASE-RELATED"/>
    <property type="match status" value="1"/>
</dbReference>
<dbReference type="Pfam" id="PF01225">
    <property type="entry name" value="Mur_ligase"/>
    <property type="match status" value="1"/>
</dbReference>
<dbReference type="Pfam" id="PF02875">
    <property type="entry name" value="Mur_ligase_C"/>
    <property type="match status" value="1"/>
</dbReference>
<dbReference type="Pfam" id="PF08245">
    <property type="entry name" value="Mur_ligase_M"/>
    <property type="match status" value="1"/>
</dbReference>
<dbReference type="SUPFAM" id="SSF51984">
    <property type="entry name" value="MurCD N-terminal domain"/>
    <property type="match status" value="1"/>
</dbReference>
<dbReference type="SUPFAM" id="SSF53623">
    <property type="entry name" value="MurD-like peptide ligases, catalytic domain"/>
    <property type="match status" value="1"/>
</dbReference>
<dbReference type="SUPFAM" id="SSF53244">
    <property type="entry name" value="MurD-like peptide ligases, peptide-binding domain"/>
    <property type="match status" value="1"/>
</dbReference>
<accession>Q816X6</accession>
<proteinExistence type="inferred from homology"/>
<keyword id="KW-0067">ATP-binding</keyword>
<keyword id="KW-0131">Cell cycle</keyword>
<keyword id="KW-0132">Cell division</keyword>
<keyword id="KW-0133">Cell shape</keyword>
<keyword id="KW-0961">Cell wall biogenesis/degradation</keyword>
<keyword id="KW-0963">Cytoplasm</keyword>
<keyword id="KW-0436">Ligase</keyword>
<keyword id="KW-0547">Nucleotide-binding</keyword>
<keyword id="KW-0573">Peptidoglycan synthesis</keyword>
<keyword id="KW-1185">Reference proteome</keyword>
<feature type="chain" id="PRO_0000182049" description="UDP-N-acetylmuramate--L-alanine ligase">
    <location>
        <begin position="1"/>
        <end position="436"/>
    </location>
</feature>
<feature type="binding site" evidence="1">
    <location>
        <begin position="108"/>
        <end position="114"/>
    </location>
    <ligand>
        <name>ATP</name>
        <dbReference type="ChEBI" id="CHEBI:30616"/>
    </ligand>
</feature>
<organism>
    <name type="scientific">Bacillus cereus (strain ATCC 14579 / DSM 31 / CCUG 7414 / JCM 2152 / NBRC 15305 / NCIMB 9373 / NCTC 2599 / NRRL B-3711)</name>
    <dbReference type="NCBI Taxonomy" id="226900"/>
    <lineage>
        <taxon>Bacteria</taxon>
        <taxon>Bacillati</taxon>
        <taxon>Bacillota</taxon>
        <taxon>Bacilli</taxon>
        <taxon>Bacillales</taxon>
        <taxon>Bacillaceae</taxon>
        <taxon>Bacillus</taxon>
        <taxon>Bacillus cereus group</taxon>
    </lineage>
</organism>
<protein>
    <recommendedName>
        <fullName evidence="1">UDP-N-acetylmuramate--L-alanine ligase</fullName>
        <ecNumber evidence="1">6.3.2.8</ecNumber>
    </recommendedName>
    <alternativeName>
        <fullName evidence="1">UDP-N-acetylmuramoyl-L-alanine synthetase</fullName>
    </alternativeName>
</protein>